<proteinExistence type="evidence at protein level"/>
<protein>
    <recommendedName>
        <fullName evidence="5">MFS siderochrome iron transporter B</fullName>
    </recommendedName>
</protein>
<reference key="1">
    <citation type="journal article" date="2005" name="Nature">
        <title>Genomic sequence of the pathogenic and allergenic filamentous fungus Aspergillus fumigatus.</title>
        <authorList>
            <person name="Nierman W.C."/>
            <person name="Pain A."/>
            <person name="Anderson M.J."/>
            <person name="Wortman J.R."/>
            <person name="Kim H.S."/>
            <person name="Arroyo J."/>
            <person name="Berriman M."/>
            <person name="Abe K."/>
            <person name="Archer D.B."/>
            <person name="Bermejo C."/>
            <person name="Bennett J.W."/>
            <person name="Bowyer P."/>
            <person name="Chen D."/>
            <person name="Collins M."/>
            <person name="Coulsen R."/>
            <person name="Davies R."/>
            <person name="Dyer P.S."/>
            <person name="Farman M.L."/>
            <person name="Fedorova N."/>
            <person name="Fedorova N.D."/>
            <person name="Feldblyum T.V."/>
            <person name="Fischer R."/>
            <person name="Fosker N."/>
            <person name="Fraser A."/>
            <person name="Garcia J.L."/>
            <person name="Garcia M.J."/>
            <person name="Goble A."/>
            <person name="Goldman G.H."/>
            <person name="Gomi K."/>
            <person name="Griffith-Jones S."/>
            <person name="Gwilliam R."/>
            <person name="Haas B.J."/>
            <person name="Haas H."/>
            <person name="Harris D.E."/>
            <person name="Horiuchi H."/>
            <person name="Huang J."/>
            <person name="Humphray S."/>
            <person name="Jimenez J."/>
            <person name="Keller N."/>
            <person name="Khouri H."/>
            <person name="Kitamoto K."/>
            <person name="Kobayashi T."/>
            <person name="Konzack S."/>
            <person name="Kulkarni R."/>
            <person name="Kumagai T."/>
            <person name="Lafton A."/>
            <person name="Latge J.-P."/>
            <person name="Li W."/>
            <person name="Lord A."/>
            <person name="Lu C."/>
            <person name="Majoros W.H."/>
            <person name="May G.S."/>
            <person name="Miller B.L."/>
            <person name="Mohamoud Y."/>
            <person name="Molina M."/>
            <person name="Monod M."/>
            <person name="Mouyna I."/>
            <person name="Mulligan S."/>
            <person name="Murphy L.D."/>
            <person name="O'Neil S."/>
            <person name="Paulsen I."/>
            <person name="Penalva M.A."/>
            <person name="Pertea M."/>
            <person name="Price C."/>
            <person name="Pritchard B.L."/>
            <person name="Quail M.A."/>
            <person name="Rabbinowitsch E."/>
            <person name="Rawlins N."/>
            <person name="Rajandream M.A."/>
            <person name="Reichard U."/>
            <person name="Renauld H."/>
            <person name="Robson G.D."/>
            <person name="Rodriguez de Cordoba S."/>
            <person name="Rodriguez-Pena J.M."/>
            <person name="Ronning C.M."/>
            <person name="Rutter S."/>
            <person name="Salzberg S.L."/>
            <person name="Sanchez M."/>
            <person name="Sanchez-Ferrero J.C."/>
            <person name="Saunders D."/>
            <person name="Seeger K."/>
            <person name="Squares R."/>
            <person name="Squares S."/>
            <person name="Takeuchi M."/>
            <person name="Tekaia F."/>
            <person name="Turner G."/>
            <person name="Vazquez de Aldana C.R."/>
            <person name="Weidman J."/>
            <person name="White O."/>
            <person name="Woodward J.R."/>
            <person name="Yu J.-H."/>
            <person name="Fraser C.M."/>
            <person name="Galagan J.E."/>
            <person name="Asai K."/>
            <person name="Machida M."/>
            <person name="Hall N."/>
            <person name="Barrell B.G."/>
            <person name="Denning D.W."/>
        </authorList>
    </citation>
    <scope>NUCLEOTIDE SEQUENCE [LARGE SCALE GENOMIC DNA]</scope>
    <source>
        <strain>ATCC MYA-4609 / CBS 101355 / FGSC A1100 / Af293</strain>
    </source>
</reference>
<reference key="2">
    <citation type="journal article" date="2012" name="Eukaryot. Cell">
        <title>Structural requirements for the activity of the MirB ferrisiderophore transporter of Aspergillus fumigatus.</title>
        <authorList>
            <person name="Raymond-Bouchard I."/>
            <person name="Carroll C.S."/>
            <person name="Nesbitt J.R."/>
            <person name="Henry K.A."/>
            <person name="Pinto L.J."/>
            <person name="Moinzadeh M."/>
            <person name="Scott J.K."/>
            <person name="Moore M.M."/>
        </authorList>
    </citation>
    <scope>FUNCTION</scope>
    <scope>MUTAGENESIS OF ALA-119; 241-ALA--GLY-248; TRP-245; TRP-247; TYR-392; 461-GLY--TYR-466; 527-THR--ALA-540; 560-GLY--ALA-574; ARG-564 AND TYR-571</scope>
    <scope>SUBCELLULAR LOCATION</scope>
    <scope>TOPOLOGY</scope>
</reference>
<reference key="3">
    <citation type="journal article" date="2022" name="MBio">
        <title>Uptake of the siderophore triacetylfusarinine C, but not fusarinine C, is crucial for virulence of Aspergillus fumigatus.</title>
        <authorList>
            <person name="Aguiar M."/>
            <person name="Orasch T."/>
            <person name="Shadkchan Y."/>
            <person name="Caballero P."/>
            <person name="Pfister J."/>
            <person name="Sastre-Velasquez L.E."/>
            <person name="Gsaller F."/>
            <person name="Decristoforo C."/>
            <person name="Osherov N."/>
            <person name="Haas H."/>
        </authorList>
    </citation>
    <scope>FUNCTION</scope>
    <scope>DISRUPTION PHENOTYPE</scope>
    <scope>INDUCTION</scope>
</reference>
<gene>
    <name evidence="5" type="primary">mirB</name>
    <name type="ORF">AFUA_3G03640</name>
</gene>
<keyword id="KW-1003">Cell membrane</keyword>
<keyword id="KW-0968">Cytoplasmic vesicle</keyword>
<keyword id="KW-0406">Ion transport</keyword>
<keyword id="KW-0408">Iron</keyword>
<keyword id="KW-0410">Iron transport</keyword>
<keyword id="KW-0472">Membrane</keyword>
<keyword id="KW-1185">Reference proteome</keyword>
<keyword id="KW-0812">Transmembrane</keyword>
<keyword id="KW-1133">Transmembrane helix</keyword>
<keyword id="KW-0813">Transport</keyword>
<keyword id="KW-0843">Virulence</keyword>
<evidence type="ECO:0000255" key="1"/>
<evidence type="ECO:0000256" key="2">
    <source>
        <dbReference type="SAM" id="MobiDB-lite"/>
    </source>
</evidence>
<evidence type="ECO:0000269" key="3">
    <source>
    </source>
</evidence>
<evidence type="ECO:0000269" key="4">
    <source>
    </source>
</evidence>
<evidence type="ECO:0000303" key="5">
    <source>
    </source>
</evidence>
<evidence type="ECO:0000305" key="6"/>
<evidence type="ECO:0000305" key="7">
    <source>
    </source>
</evidence>
<organism>
    <name type="scientific">Aspergillus fumigatus (strain ATCC MYA-4609 / CBS 101355 / FGSC A1100 / Af293)</name>
    <name type="common">Neosartorya fumigata</name>
    <dbReference type="NCBI Taxonomy" id="330879"/>
    <lineage>
        <taxon>Eukaryota</taxon>
        <taxon>Fungi</taxon>
        <taxon>Dikarya</taxon>
        <taxon>Ascomycota</taxon>
        <taxon>Pezizomycotina</taxon>
        <taxon>Eurotiomycetes</taxon>
        <taxon>Eurotiomycetidae</taxon>
        <taxon>Eurotiales</taxon>
        <taxon>Aspergillaceae</taxon>
        <taxon>Aspergillus</taxon>
        <taxon>Aspergillus subgen. Fumigati</taxon>
    </lineage>
</organism>
<name>MIRB_ASPFU</name>
<accession>Q4WF31</accession>
<dbReference type="EMBL" id="AAHF01000010">
    <property type="protein sequence ID" value="EAL86646.1"/>
    <property type="molecule type" value="Genomic_DNA"/>
</dbReference>
<dbReference type="RefSeq" id="XP_748684.1">
    <property type="nucleotide sequence ID" value="XM_743591.1"/>
</dbReference>
<dbReference type="SMR" id="Q4WF31"/>
<dbReference type="STRING" id="330879.Q4WF31"/>
<dbReference type="EnsemblFungi" id="EAL86646">
    <property type="protein sequence ID" value="EAL86646"/>
    <property type="gene ID" value="AFUA_3G03640"/>
</dbReference>
<dbReference type="GeneID" id="3505886"/>
<dbReference type="KEGG" id="afm:AFUA_3G03640"/>
<dbReference type="eggNOG" id="KOG0254">
    <property type="taxonomic scope" value="Eukaryota"/>
</dbReference>
<dbReference type="HOGENOM" id="CLU_012970_1_0_1"/>
<dbReference type="InParanoid" id="Q4WF31"/>
<dbReference type="OMA" id="FRQPGGY"/>
<dbReference type="OrthoDB" id="4078873at2759"/>
<dbReference type="Proteomes" id="UP000002530">
    <property type="component" value="Chromosome 3"/>
</dbReference>
<dbReference type="GO" id="GO:0051286">
    <property type="term" value="C:cell tip"/>
    <property type="evidence" value="ECO:0007669"/>
    <property type="project" value="UniProtKB-SubCell"/>
</dbReference>
<dbReference type="GO" id="GO:0030659">
    <property type="term" value="C:cytoplasmic vesicle membrane"/>
    <property type="evidence" value="ECO:0007669"/>
    <property type="project" value="UniProtKB-SubCell"/>
</dbReference>
<dbReference type="GO" id="GO:0005886">
    <property type="term" value="C:plasma membrane"/>
    <property type="evidence" value="ECO:0000318"/>
    <property type="project" value="GO_Central"/>
</dbReference>
<dbReference type="GO" id="GO:0022857">
    <property type="term" value="F:transmembrane transporter activity"/>
    <property type="evidence" value="ECO:0000318"/>
    <property type="project" value="GO_Central"/>
</dbReference>
<dbReference type="GO" id="GO:0006826">
    <property type="term" value="P:iron ion transport"/>
    <property type="evidence" value="ECO:0007669"/>
    <property type="project" value="UniProtKB-KW"/>
</dbReference>
<dbReference type="GO" id="GO:0055085">
    <property type="term" value="P:transmembrane transport"/>
    <property type="evidence" value="ECO:0000318"/>
    <property type="project" value="GO_Central"/>
</dbReference>
<dbReference type="FunFam" id="1.20.1250.20:FF:000302">
    <property type="entry name" value="MFS siderochrome iron transporter MirB"/>
    <property type="match status" value="1"/>
</dbReference>
<dbReference type="FunFam" id="1.20.1250.20:FF:000284">
    <property type="entry name" value="Siderophore iron transporter mirB"/>
    <property type="match status" value="1"/>
</dbReference>
<dbReference type="Gene3D" id="1.20.1250.20">
    <property type="entry name" value="MFS general substrate transporter like domains"/>
    <property type="match status" value="2"/>
</dbReference>
<dbReference type="InterPro" id="IPR011701">
    <property type="entry name" value="MFS"/>
</dbReference>
<dbReference type="InterPro" id="IPR036259">
    <property type="entry name" value="MFS_trans_sf"/>
</dbReference>
<dbReference type="PANTHER" id="PTHR23501">
    <property type="entry name" value="MAJOR FACILITATOR SUPERFAMILY"/>
    <property type="match status" value="1"/>
</dbReference>
<dbReference type="PANTHER" id="PTHR23501:SF50">
    <property type="entry name" value="MFS SIDEROCHROME IRON TRANSPORTER MIRB (AFU_ORTHOLOGUE AFUA_3G03640)-RELATED"/>
    <property type="match status" value="1"/>
</dbReference>
<dbReference type="Pfam" id="PF07690">
    <property type="entry name" value="MFS_1"/>
    <property type="match status" value="1"/>
</dbReference>
<dbReference type="SUPFAM" id="SSF103473">
    <property type="entry name" value="MFS general substrate transporter"/>
    <property type="match status" value="2"/>
</dbReference>
<comment type="function">
    <text evidence="3 4">Major facilitator transporter involved in triacetylfusarinine C (TAFC) uptake (PubMed:22903978, PubMed:36125294). Can also transport ferricrocin and coprogen, but not ferrichrysin (PubMed:22903978). MirB plays a crucial role for virulence in a murine model of pulmonary aspergillosis, indicating that TAFC-mediated iron uptake plays a dominant role during infection (PubMed:36125294).</text>
</comment>
<comment type="subcellular location">
    <subcellularLocation>
        <location evidence="3">Cell tip</location>
    </subcellularLocation>
    <subcellularLocation>
        <location evidence="3">Cytoplasmic vesicle membrane</location>
        <topology evidence="3">Multi-pass membrane protein</topology>
    </subcellularLocation>
    <subcellularLocation>
        <location evidence="3">Cell membrane</location>
        <topology evidence="3">Multi-pass membrane protein</topology>
    </subcellularLocation>
    <text evidence="3">Localizes to vesicles which cycle between the cytoplasm and the plasma membrane and is concentrated at the hyphal tips (PubMed:22903978).</text>
</comment>
<comment type="induction">
    <text evidence="4">Expression is repressed by iron.</text>
</comment>
<comment type="disruption phenotype">
    <text evidence="4">Impairs TAFC-mediated iron uptake.</text>
</comment>
<comment type="similarity">
    <text evidence="6">Belongs to the major facilitator superfamily.</text>
</comment>
<feature type="chain" id="PRO_0000444407" description="MFS siderochrome iron transporter B">
    <location>
        <begin position="1"/>
        <end position="612"/>
    </location>
</feature>
<feature type="topological domain" description="Cytoplasmic" evidence="7">
    <location>
        <begin position="1"/>
        <end position="86"/>
    </location>
</feature>
<feature type="transmembrane region" description="Helical" evidence="1">
    <location>
        <begin position="87"/>
        <end position="104"/>
    </location>
</feature>
<feature type="topological domain" description="Extracellular" evidence="6 7">
    <location>
        <begin position="105"/>
        <end position="127"/>
    </location>
</feature>
<feature type="transmembrane region" description="Helical" evidence="1">
    <location>
        <begin position="128"/>
        <end position="148"/>
    </location>
</feature>
<feature type="topological domain" description="Cytoplasmic" evidence="6 7">
    <location>
        <begin position="149"/>
        <end position="156"/>
    </location>
</feature>
<feature type="transmembrane region" description="Helical" evidence="1">
    <location>
        <begin position="157"/>
        <end position="177"/>
    </location>
</feature>
<feature type="topological domain" description="Extracellular" evidence="6 7">
    <location>
        <begin position="178"/>
        <end position="187"/>
    </location>
</feature>
<feature type="transmembrane region" description="Helical" evidence="1">
    <location>
        <begin position="188"/>
        <end position="208"/>
    </location>
</feature>
<feature type="topological domain" description="Cytoplasmic" evidence="6 7">
    <location>
        <begin position="209"/>
        <end position="215"/>
    </location>
</feature>
<feature type="transmembrane region" description="Helical" evidence="1">
    <location>
        <begin position="216"/>
        <end position="236"/>
    </location>
</feature>
<feature type="topological domain" description="Extracellular" evidence="6 7">
    <location>
        <begin position="237"/>
        <end position="246"/>
    </location>
</feature>
<feature type="transmembrane region" description="Helical" evidence="1">
    <location>
        <begin position="247"/>
        <end position="267"/>
    </location>
</feature>
<feature type="topological domain" description="Cytoplasmic" evidence="6 7">
    <location>
        <begin position="268"/>
        <end position="302"/>
    </location>
</feature>
<feature type="transmembrane region" description="Helical" evidence="1">
    <location>
        <begin position="303"/>
        <end position="323"/>
    </location>
</feature>
<feature type="topological domain" description="Extracellular" evidence="6 7">
    <location>
        <begin position="324"/>
        <end position="334"/>
    </location>
</feature>
<feature type="transmembrane region" description="Helical" evidence="1">
    <location>
        <begin position="335"/>
        <end position="355"/>
    </location>
</feature>
<feature type="topological domain" description="Cytoplasmic" evidence="6 7">
    <location>
        <begin position="356"/>
        <end position="370"/>
    </location>
</feature>
<feature type="transmembrane region" description="Helical" evidence="1">
    <location>
        <begin position="371"/>
        <end position="393"/>
    </location>
</feature>
<feature type="topological domain" description="Extracellular" evidence="6 7">
    <location>
        <begin position="394"/>
        <end position="409"/>
    </location>
</feature>
<feature type="transmembrane region" description="Helical" evidence="1">
    <location>
        <begin position="410"/>
        <end position="430"/>
    </location>
</feature>
<feature type="topological domain" description="Cytoplasmic" evidence="6 7">
    <location>
        <begin position="431"/>
        <end position="435"/>
    </location>
</feature>
<feature type="transmembrane region" description="Helical" evidence="1">
    <location>
        <begin position="436"/>
        <end position="456"/>
    </location>
</feature>
<feature type="topological domain" description="Extracellular" evidence="6 7">
    <location>
        <begin position="457"/>
        <end position="463"/>
    </location>
</feature>
<feature type="transmembrane region" description="Helical" evidence="1">
    <location>
        <begin position="464"/>
        <end position="484"/>
    </location>
</feature>
<feature type="topological domain" description="Cytoplasmic" evidence="6 7">
    <location>
        <begin position="485"/>
        <end position="498"/>
    </location>
</feature>
<feature type="transmembrane region" description="Helical" evidence="1">
    <location>
        <begin position="499"/>
        <end position="519"/>
    </location>
</feature>
<feature type="topological domain" description="Extracellular" evidence="6 7">
    <location>
        <begin position="520"/>
        <end position="575"/>
    </location>
</feature>
<feature type="transmembrane region" description="Helical" evidence="1">
    <location>
        <begin position="576"/>
        <end position="596"/>
    </location>
</feature>
<feature type="topological domain" description="Cytoplasmic" evidence="6">
    <location>
        <begin position="597"/>
        <end position="612"/>
    </location>
</feature>
<feature type="region of interest" description="Disordered" evidence="2">
    <location>
        <begin position="55"/>
        <end position="78"/>
    </location>
</feature>
<feature type="compositionally biased region" description="Low complexity" evidence="2">
    <location>
        <begin position="60"/>
        <end position="72"/>
    </location>
</feature>
<feature type="mutagenesis site" description="Decreases the uptake of triacetylfusarinine C (TAFC)." evidence="3">
    <original>A</original>
    <variation>D</variation>
    <location>
        <position position="119"/>
    </location>
</feature>
<feature type="mutagenesis site" description="In Loop3Del; decreases the uptake of triacetylfusarinine C (TAFC)." evidence="3">
    <location>
        <begin position="241"/>
        <end position="248"/>
    </location>
</feature>
<feature type="mutagenesis site" description="Decreases the uptake of triacetylfusarinine C (TAFC); when associated with A-247." evidence="3">
    <original>W</original>
    <variation>A</variation>
    <location>
        <position position="245"/>
    </location>
</feature>
<feature type="mutagenesis site" description="Decreases the uptake of triacetylfusarinine C (TAFC); when associated with A-245." evidence="3">
    <original>W</original>
    <variation>A</variation>
    <location>
        <position position="247"/>
    </location>
</feature>
<feature type="mutagenesis site" description="Decreases the uptake of triacetylfusarinine C (TAFC)." evidence="3">
    <original>Y</original>
    <variation>A</variation>
    <location>
        <position position="392"/>
    </location>
</feature>
<feature type="mutagenesis site" description="In Loop6Del; decreases the uptake of triacetylfusarinine C (TAFC)." evidence="3">
    <location>
        <begin position="461"/>
        <end position="466"/>
    </location>
</feature>
<feature type="mutagenesis site" description="In Loop7Del1; decreases the uptake of triacetylfusarinine C (TAFC)." evidence="3">
    <location>
        <begin position="527"/>
        <end position="540"/>
    </location>
</feature>
<feature type="mutagenesis site" description="In Loop7Del2; decreases the uptake of triacetylfusarinine C (TAFC)." evidence="3">
    <location>
        <begin position="560"/>
        <end position="574"/>
    </location>
</feature>
<feature type="mutagenesis site" description="Decreases the uptake of triacetylfusarinine C (TAFC)." evidence="3">
    <original>R</original>
    <variation>A</variation>
    <location>
        <position position="564"/>
    </location>
</feature>
<feature type="mutagenesis site" description="Decreases the uptake of triacetylfusarinine C (TAFC)." evidence="3">
    <original>Y</original>
    <variation>A</variation>
    <location>
        <position position="571"/>
    </location>
</feature>
<sequence>MLHVLSVGPSHAAFTVEAAMATMKKFHSIVGEKPAQDAEAPSVDDPNVGQIRADDKEAAHAPANAETNNEEANPSDGAQAGVKKIEAVTLSWTRGTAIWFLTLVNDFRLSMYTSLNAYATSSFLGHSLLTVINIVSYVMGGSVYIPMAKALDLWGRAEGFLLMTFFCILGLILLASSQNLPTYCAGQVFYKVGFGGLSYTWNVLAADVTNLRNRGLAFAFTSSPALISAFAGSKAASDLLAHSTWRWGFGMWAIILPVVALPIYGLLAYHLRQAEKKGVLVKETRDWSITPKTVWWAIMEFDLPGVLLFAGGFVIFLLPFTLAATAPHGYQTDYIIAMITLGLALIIAFGFYEMLVAPVPFLNYKFLIDRTVLGACLLDMTYQVSYYCYASYLPSFLQVVYELDVATAGYVTNTFSVVSFVFLFFAGWLIRWTGRFKWILWVCVPLYIFGLGLMIHFRQPGGYIGYIVMCEIFFSVAGSVFILCVQLAVLASVDHQHVAAVLALLFVMGSIGGSIGSAICGAIWTSTFLSRLERNLPASAMPDLSLIYSSLPTQLSYPVGSATRTAIVEAYGYAQARMLIAGTAFMVLGFIWVGMMRNLNVKNMTQTKGNVV</sequence>